<name>RPFC_XANC8</name>
<dbReference type="EC" id="2.7.13.3" evidence="12"/>
<dbReference type="EMBL" id="AJ251547">
    <property type="protein sequence ID" value="CAB89845.1"/>
    <property type="molecule type" value="Genomic_DNA"/>
</dbReference>
<dbReference type="EMBL" id="CP000050">
    <property type="protein sequence ID" value="AAY49386.1"/>
    <property type="molecule type" value="Genomic_DNA"/>
</dbReference>
<dbReference type="PIR" id="S16003">
    <property type="entry name" value="S16003"/>
</dbReference>
<dbReference type="RefSeq" id="WP_011269804.1">
    <property type="nucleotide sequence ID" value="NC_007086.1"/>
</dbReference>
<dbReference type="SMR" id="P0C0F7"/>
<dbReference type="KEGG" id="xcb:XC_2333"/>
<dbReference type="HOGENOM" id="CLU_000445_104_10_6"/>
<dbReference type="PHI-base" id="PHI:7059"/>
<dbReference type="PHI-base" id="PHI:8361"/>
<dbReference type="PHI-base" id="PHI:8453"/>
<dbReference type="Proteomes" id="UP000000420">
    <property type="component" value="Chromosome"/>
</dbReference>
<dbReference type="GO" id="GO:0005886">
    <property type="term" value="C:plasma membrane"/>
    <property type="evidence" value="ECO:0007669"/>
    <property type="project" value="UniProtKB-SubCell"/>
</dbReference>
<dbReference type="GO" id="GO:0005524">
    <property type="term" value="F:ATP binding"/>
    <property type="evidence" value="ECO:0007669"/>
    <property type="project" value="UniProtKB-KW"/>
</dbReference>
<dbReference type="GO" id="GO:0000155">
    <property type="term" value="F:phosphorelay sensor kinase activity"/>
    <property type="evidence" value="ECO:0007669"/>
    <property type="project" value="InterPro"/>
</dbReference>
<dbReference type="CDD" id="cd16922">
    <property type="entry name" value="HATPase_EvgS-ArcB-TorS-like"/>
    <property type="match status" value="1"/>
</dbReference>
<dbReference type="CDD" id="cd00082">
    <property type="entry name" value="HisKA"/>
    <property type="match status" value="1"/>
</dbReference>
<dbReference type="CDD" id="cd17546">
    <property type="entry name" value="REC_hyHK_CKI1_RcsC-like"/>
    <property type="match status" value="1"/>
</dbReference>
<dbReference type="FunFam" id="3.30.565.10:FF:000010">
    <property type="entry name" value="Sensor histidine kinase RcsC"/>
    <property type="match status" value="1"/>
</dbReference>
<dbReference type="FunFam" id="1.10.287.130:FF:000002">
    <property type="entry name" value="Two-component osmosensing histidine kinase"/>
    <property type="match status" value="1"/>
</dbReference>
<dbReference type="Gene3D" id="1.10.287.130">
    <property type="match status" value="1"/>
</dbReference>
<dbReference type="Gene3D" id="3.40.50.2300">
    <property type="match status" value="1"/>
</dbReference>
<dbReference type="Gene3D" id="3.30.565.10">
    <property type="entry name" value="Histidine kinase-like ATPase, C-terminal domain"/>
    <property type="match status" value="1"/>
</dbReference>
<dbReference type="Gene3D" id="1.20.120.160">
    <property type="entry name" value="HPT domain"/>
    <property type="match status" value="1"/>
</dbReference>
<dbReference type="InterPro" id="IPR011006">
    <property type="entry name" value="CheY-like_superfamily"/>
</dbReference>
<dbReference type="InterPro" id="IPR036890">
    <property type="entry name" value="HATPase_C_sf"/>
</dbReference>
<dbReference type="InterPro" id="IPR005467">
    <property type="entry name" value="His_kinase_dom"/>
</dbReference>
<dbReference type="InterPro" id="IPR003661">
    <property type="entry name" value="HisK_dim/P_dom"/>
</dbReference>
<dbReference type="InterPro" id="IPR036097">
    <property type="entry name" value="HisK_dim/P_sf"/>
</dbReference>
<dbReference type="InterPro" id="IPR036641">
    <property type="entry name" value="HPT_dom_sf"/>
</dbReference>
<dbReference type="InterPro" id="IPR004358">
    <property type="entry name" value="Sig_transdc_His_kin-like_C"/>
</dbReference>
<dbReference type="InterPro" id="IPR008207">
    <property type="entry name" value="Sig_transdc_His_kin_Hpt_dom"/>
</dbReference>
<dbReference type="InterPro" id="IPR001789">
    <property type="entry name" value="Sig_transdc_resp-reg_receiver"/>
</dbReference>
<dbReference type="PANTHER" id="PTHR45339">
    <property type="entry name" value="HYBRID SIGNAL TRANSDUCTION HISTIDINE KINASE J"/>
    <property type="match status" value="1"/>
</dbReference>
<dbReference type="PANTHER" id="PTHR45339:SF1">
    <property type="entry name" value="HYBRID SIGNAL TRANSDUCTION HISTIDINE KINASE J"/>
    <property type="match status" value="1"/>
</dbReference>
<dbReference type="Pfam" id="PF02518">
    <property type="entry name" value="HATPase_c"/>
    <property type="match status" value="1"/>
</dbReference>
<dbReference type="Pfam" id="PF00512">
    <property type="entry name" value="HisKA"/>
    <property type="match status" value="1"/>
</dbReference>
<dbReference type="Pfam" id="PF01627">
    <property type="entry name" value="Hpt"/>
    <property type="match status" value="1"/>
</dbReference>
<dbReference type="Pfam" id="PF00072">
    <property type="entry name" value="Response_reg"/>
    <property type="match status" value="1"/>
</dbReference>
<dbReference type="PRINTS" id="PR00344">
    <property type="entry name" value="BCTRLSENSOR"/>
</dbReference>
<dbReference type="SMART" id="SM00387">
    <property type="entry name" value="HATPase_c"/>
    <property type="match status" value="1"/>
</dbReference>
<dbReference type="SMART" id="SM00388">
    <property type="entry name" value="HisKA"/>
    <property type="match status" value="1"/>
</dbReference>
<dbReference type="SMART" id="SM00073">
    <property type="entry name" value="HPT"/>
    <property type="match status" value="1"/>
</dbReference>
<dbReference type="SMART" id="SM00448">
    <property type="entry name" value="REC"/>
    <property type="match status" value="1"/>
</dbReference>
<dbReference type="SUPFAM" id="SSF55874">
    <property type="entry name" value="ATPase domain of HSP90 chaperone/DNA topoisomerase II/histidine kinase"/>
    <property type="match status" value="1"/>
</dbReference>
<dbReference type="SUPFAM" id="SSF52172">
    <property type="entry name" value="CheY-like"/>
    <property type="match status" value="1"/>
</dbReference>
<dbReference type="SUPFAM" id="SSF47226">
    <property type="entry name" value="Histidine-containing phosphotransfer domain, HPT domain"/>
    <property type="match status" value="1"/>
</dbReference>
<dbReference type="SUPFAM" id="SSF47384">
    <property type="entry name" value="Homodimeric domain of signal transducing histidine kinase"/>
    <property type="match status" value="1"/>
</dbReference>
<dbReference type="PROSITE" id="PS50109">
    <property type="entry name" value="HIS_KIN"/>
    <property type="match status" value="1"/>
</dbReference>
<dbReference type="PROSITE" id="PS50894">
    <property type="entry name" value="HPT"/>
    <property type="match status" value="1"/>
</dbReference>
<dbReference type="PROSITE" id="PS50110">
    <property type="entry name" value="RESPONSE_REGULATORY"/>
    <property type="match status" value="1"/>
</dbReference>
<evidence type="ECO:0000255" key="1"/>
<evidence type="ECO:0000255" key="2">
    <source>
        <dbReference type="PROSITE-ProRule" id="PRU00107"/>
    </source>
</evidence>
<evidence type="ECO:0000255" key="3">
    <source>
        <dbReference type="PROSITE-ProRule" id="PRU00110"/>
    </source>
</evidence>
<evidence type="ECO:0000255" key="4">
    <source>
        <dbReference type="PROSITE-ProRule" id="PRU00169"/>
    </source>
</evidence>
<evidence type="ECO:0000269" key="5">
    <source>
    </source>
</evidence>
<evidence type="ECO:0000269" key="6">
    <source>
    </source>
</evidence>
<evidence type="ECO:0000269" key="7">
    <source>
    </source>
</evidence>
<evidence type="ECO:0000269" key="8">
    <source>
    </source>
</evidence>
<evidence type="ECO:0000269" key="9">
    <source>
    </source>
</evidence>
<evidence type="ECO:0000305" key="10"/>
<evidence type="ECO:0000305" key="11">
    <source>
    </source>
</evidence>
<evidence type="ECO:0000305" key="12">
    <source>
    </source>
</evidence>
<evidence type="ECO:0000305" key="13">
    <source>
    </source>
</evidence>
<protein>
    <recommendedName>
        <fullName>Sensory/regulatory protein RpfC</fullName>
        <ecNumber evidence="12">2.7.13.3</ecNumber>
    </recommendedName>
</protein>
<sequence length="726" mass="79806">MKSPLPWLKRRLSGRADSEHAQNLIRIIITTLFISYLGWRYQHTHGDTLMATWLILVGELLVSLGLMVAILLRPQVSHTRRLIGMLLDYTCTGAIMAIQGEPASPLYAVCMWVTIGNGLRYGSNYLRAATAMGSLCFLGAILISPYWKANPYLSWGLLLGLIAVPLYFDSLLRAMTRAVREARHANQAKSRFLANMSHEFRTPLNGLSGMTEVLATTRLDAEQKECLNTIQASARSLLSLVEEVLDISAIEAGKIRIDRRDFSLREMIGSVNLILQPQARGRRLEYGTQVADDVPDLLKGDTAHLRQVLLNLVGNAVKFTEHGHVLLRVTRVSGSAEDAVRLRFDVEDTGIGVPMDMRPRLFEAFEQADVGLSRRYEGTGLGTTIAKGLVEAMGGSIGFKENQPSGSVFWFELPMAIGEPLKSSTVRVPTGALVDAPEELESSNIIAFSNPFLRHRARVRSMRMLVADDHEANRMVLQRLLEKAGHKVLCVNGAEQVLDAMAEEDYDAVIVDLHMPGMNGLDMLKQLRVMQASGMRYTPVVVLSADVTPEAIRACEQAGARAFLAKPVLAAKLLDTLADLAVSTRQLATPATTVQVATSFEGVLDSSVLDELAALGMGEEFERQFVRQCLDDAQNCVGDIERDGTCSDWEQLRESAHALRGVASNLGLAQVASSGGELMRMADWQLQAEWRLRLSTLREQLKAGKDALDARVQGVKDGECSPRSNE</sequence>
<gene>
    <name type="primary">rpfC</name>
    <name type="ordered locus">XC_2333</name>
</gene>
<keyword id="KW-0067">ATP-binding</keyword>
<keyword id="KW-0997">Cell inner membrane</keyword>
<keyword id="KW-1003">Cell membrane</keyword>
<keyword id="KW-0418">Kinase</keyword>
<keyword id="KW-0472">Membrane</keyword>
<keyword id="KW-0547">Nucleotide-binding</keyword>
<keyword id="KW-0597">Phosphoprotein</keyword>
<keyword id="KW-0804">Transcription</keyword>
<keyword id="KW-0805">Transcription regulation</keyword>
<keyword id="KW-0808">Transferase</keyword>
<keyword id="KW-0812">Transmembrane</keyword>
<keyword id="KW-1133">Transmembrane helix</keyword>
<keyword id="KW-0902">Two-component regulatory system</keyword>
<keyword id="KW-0843">Virulence</keyword>
<accession>P0C0F7</accession>
<accession>Q4UU87</accession>
<accession>Q9L431</accession>
<organism>
    <name type="scientific">Xanthomonas campestris pv. campestris (strain 8004)</name>
    <dbReference type="NCBI Taxonomy" id="314565"/>
    <lineage>
        <taxon>Bacteria</taxon>
        <taxon>Pseudomonadati</taxon>
        <taxon>Pseudomonadota</taxon>
        <taxon>Gammaproteobacteria</taxon>
        <taxon>Lysobacterales</taxon>
        <taxon>Lysobacteraceae</taxon>
        <taxon>Xanthomonas</taxon>
    </lineage>
</organism>
<proteinExistence type="evidence at protein level"/>
<feature type="chain" id="PRO_0000074863" description="Sensory/regulatory protein RpfC">
    <location>
        <begin position="1"/>
        <end position="726"/>
    </location>
</feature>
<feature type="topological domain" description="Periplasmic" evidence="12">
    <location>
        <begin position="1"/>
        <end position="22"/>
    </location>
</feature>
<feature type="transmembrane region" description="Helical" evidence="1">
    <location>
        <begin position="23"/>
        <end position="40"/>
    </location>
</feature>
<feature type="topological domain" description="Cytoplasmic" evidence="12">
    <location>
        <begin position="41"/>
        <end position="51"/>
    </location>
</feature>
<feature type="transmembrane region" description="Helical" evidence="1">
    <location>
        <begin position="52"/>
        <end position="72"/>
    </location>
</feature>
<feature type="topological domain" description="Periplasmic" evidence="12">
    <location>
        <begin position="73"/>
        <end position="94"/>
    </location>
</feature>
<feature type="transmembrane region" description="Helical" evidence="1">
    <location>
        <begin position="95"/>
        <end position="115"/>
    </location>
</feature>
<feature type="topological domain" description="Cytoplasmic" evidence="12">
    <location>
        <begin position="116"/>
        <end position="127"/>
    </location>
</feature>
<feature type="transmembrane region" description="Helical" evidence="1">
    <location>
        <begin position="128"/>
        <end position="148"/>
    </location>
</feature>
<feature type="topological domain" description="Periplasmic" evidence="12">
    <location>
        <begin position="149"/>
        <end position="151"/>
    </location>
</feature>
<feature type="transmembrane region" description="Helical" evidence="1">
    <location>
        <begin position="152"/>
        <end position="172"/>
    </location>
</feature>
<feature type="topological domain" description="Cytoplasmic" evidence="12">
    <location>
        <begin position="173"/>
        <end position="726"/>
    </location>
</feature>
<feature type="domain" description="Histidine kinase" evidence="2">
    <location>
        <begin position="195"/>
        <end position="417"/>
    </location>
</feature>
<feature type="domain" description="Response regulatory" evidence="4">
    <location>
        <begin position="463"/>
        <end position="581"/>
    </location>
</feature>
<feature type="domain" description="HPt" evidence="3">
    <location>
        <begin position="618"/>
        <end position="711"/>
    </location>
</feature>
<feature type="region of interest" description="Sensor" evidence="12">
    <location>
        <begin position="1"/>
        <end position="22"/>
    </location>
</feature>
<feature type="modified residue" description="Phosphohistidine; by autocatalysis" evidence="2">
    <location>
        <position position="198"/>
    </location>
</feature>
<feature type="modified residue" description="4-aspartylphosphate" evidence="4">
    <location>
        <position position="512"/>
    </location>
</feature>
<feature type="modified residue" description="Phosphohistidine" evidence="3">
    <location>
        <position position="657"/>
    </location>
</feature>
<feature type="mutagenesis site" description="Cannot interact with DSF. Significant decrease in EXP and EPS production, as well as in biofilm formation. Substantial attenuation in virulence." evidence="9">
    <original>R</original>
    <variation>A</variation>
    <location>
        <position position="15"/>
    </location>
</feature>
<feature type="mutagenesis site" description="Cannot interact with DSF. Significant decrease in EXP and EPS production, as well as in biofilm formation. Substantial attenuation in virulence." evidence="9">
    <original>D</original>
    <variation>A</variation>
    <location>
        <position position="17"/>
    </location>
</feature>
<feature type="mutagenesis site" description="Cannot interact with DSF. Significant decrease in EXP and EPS production, as well as in biofilm formation. Substantial attenuation in virulence." evidence="9">
    <original>S</original>
    <variation>A</variation>
    <location>
        <position position="18"/>
    </location>
</feature>
<feature type="mutagenesis site" description="Has similar or increased levels in EXP activity, EPS production and biofilm formation. Does not affect virulence." evidence="9">
    <original>S</original>
    <variation>T</variation>
    <location>
        <position position="18"/>
    </location>
</feature>
<feature type="mutagenesis site" description="Cannot interact with DSF. Significant decrease in EXP and EPS production, as well as in biofilm formation. Substantial attenuation in virulence." evidence="9">
    <original>E</original>
    <variation>A</variation>
    <location>
        <position position="19"/>
    </location>
</feature>
<feature type="mutagenesis site" description="Cannot interact with DSF. Significant decrease in EXP and EPS production, as well as in biofilm formation. Substantial attenuation in virulence." evidence="9">
    <original>Q</original>
    <variation>A</variation>
    <location>
        <position position="22"/>
    </location>
</feature>
<feature type="mutagenesis site" description="Constitutive activation of kinase activity." evidence="9">
    <original>L</original>
    <variation>A</variation>
    <location>
        <position position="172"/>
    </location>
</feature>
<feature type="mutagenesis site" description="Constitutive activation of kinase activity." evidence="9">
    <original>A</original>
    <variation>D</variation>
    <location>
        <position position="178"/>
    </location>
</feature>
<feature type="mutagenesis site" description="Decreased production of EPS and reduced activity of cellulase and protease. No change in DSF production." evidence="7">
    <original>H</original>
    <variation>A</variation>
    <location>
        <position position="198"/>
    </location>
</feature>
<feature type="mutagenesis site" description="Decreases repressor activity of the response regulatory domain." evidence="7">
    <original>Q</original>
    <variation>A</variation>
    <location>
        <position position="496"/>
    </location>
</feature>
<feature type="mutagenesis site" description="Decreases repressor activity of the response regulatory domain." evidence="7">
    <original>E</original>
    <variation>A</variation>
    <location>
        <position position="504"/>
    </location>
</feature>
<feature type="mutagenesis site" description="Decreased production of EPS and reduced activity of cellulase and protease. No change in DSF production. Does not affect the DSF-dependent autokinase activity." evidence="7 9">
    <original>D</original>
    <variation>V</variation>
    <location>
        <position position="512"/>
    </location>
</feature>
<feature type="mutagenesis site" description="Decreases repressor activity of the response regulatory domain." evidence="7">
    <original>I</original>
    <variation>A</variation>
    <location>
        <position position="552"/>
    </location>
</feature>
<feature type="mutagenesis site" description="Decreased production of EPS and reduced activity of cellulase and protease. No change in DSF production. Does not affect the DSF-dependent autokinase activity." evidence="7 9">
    <original>H</original>
    <variation>A</variation>
    <location>
        <position position="657"/>
    </location>
</feature>
<feature type="sequence conflict" description="In Ref. 3; no nucleotide entry." evidence="10" ref="3">
    <original>C</original>
    <variation>G</variation>
    <location>
        <position position="226"/>
    </location>
</feature>
<feature type="sequence conflict" description="In Ref. 3; no nucleotide entry." evidence="10" ref="3">
    <original>TLADLAVSTRQLATP</original>
    <variation>NPGRSGSEHPAVGDA</variation>
    <location>
        <begin position="576"/>
        <end position="590"/>
    </location>
</feature>
<comment type="function">
    <text evidence="5 6 7 9">Hybrid sensor kinase that regulates diverse biological functions through two distinct molecular mechanisms (PubMed:16940295). At low cell density, the extracellular concentration of the diffusible signaling factor (DSF) is below a threshold, and unphosphorylated RpfC is involved in the negative regulation of DSF synthesis, via direct interaction with the DSF synthase RpfF. Interaction prevents synthesis of DSF, which remains at a basal level. This activity does not involve the phosphorelay mechanism and is not dependent on RpfG (PubMed:11123673, PubMed:16940295). Is also member of the two-component regulatory system RpfG/RpfC, which is involved in the perception and response to DSF, which is essential for cell-cell signaling (PubMed:11123673, PubMed:12960398). At high cell density, the level of extracellular DSF increases and binding of DSF to the sensor region of RpfC causes autophosphorylation of RpfC, which results in the release of RpfF and the activation of RpfG via a four-step phosphorelay (PubMed:16940295, PubMed:28369120). Activation of RpfG leads to the positive regulation of biofilm dispersal and the production of virulence factors (PubMed:12960398).</text>
</comment>
<comment type="catalytic activity">
    <reaction evidence="12">
        <text>ATP + protein L-histidine = ADP + protein N-phospho-L-histidine.</text>
        <dbReference type="EC" id="2.7.13.3"/>
    </reaction>
</comment>
<comment type="activity regulation">
    <text evidence="9">Binding of DSF to the sensor region causes allosteric change, which facilitates RpfC autophosphorylation.</text>
</comment>
<comment type="subunit">
    <text evidence="7">At low DSF concentrations, interacts with RpfF.</text>
</comment>
<comment type="subcellular location">
    <subcellularLocation>
        <location evidence="12">Cell inner membrane</location>
        <topology evidence="1">Multi-pass membrane protein</topology>
    </subcellularLocation>
    <text evidence="8">Localizes at the cell poles.</text>
</comment>
<comment type="domain">
    <text evidence="7 9">The N-terminal input region plays an essential role in DSF perception. DSF binds with high affinity to a 22-amino acid sensor region at the N-terminus (PubMed:28369120). The response regulatory domain, but not the HPt domain, is required for repression of DSF biosynthesis (PubMed:16940295).</text>
</comment>
<comment type="PTM">
    <text evidence="9 10">Autophosphorylated (PubMed:28369120). Activation may require a sequential transfer of a phosphate group from a His in the primary transmitter domain, to an Asp in the receiver domain and to a His in the secondary transmitter domain (Probable).</text>
</comment>
<comment type="caution">
    <text evidence="11 13">The article describing the function has been retracted due to duplications and irregularities in some figures, but repeated experiments using the original strains support the findings.</text>
</comment>
<reference key="1">
    <citation type="journal article" date="2000" name="Mol. Microbiol.">
        <title>A two-component system involving an HD-GYP domain protein links cell-cell signalling to pathogenicity gene expression in Xanthomonas campestris.</title>
        <authorList>
            <person name="Slater H."/>
            <person name="Alvarez-Morales A."/>
            <person name="Barber C.E."/>
            <person name="Daniels M.J."/>
            <person name="Dow J.M."/>
        </authorList>
    </citation>
    <scope>NUCLEOTIDE SEQUENCE [GENOMIC DNA]</scope>
    <scope>FUNCTION</scope>
    <source>
        <strain>8004</strain>
    </source>
</reference>
<reference key="2">
    <citation type="journal article" date="2005" name="Genome Res.">
        <title>Comparative and functional genomic analyses of the pathogenicity of phytopathogen Xanthomonas campestris pv. campestris.</title>
        <authorList>
            <person name="Qian W."/>
            <person name="Jia Y."/>
            <person name="Ren S.-X."/>
            <person name="He Y.-Q."/>
            <person name="Feng J.-X."/>
            <person name="Lu L.-F."/>
            <person name="Sun Q."/>
            <person name="Ying G."/>
            <person name="Tang D.-J."/>
            <person name="Tang H."/>
            <person name="Wu W."/>
            <person name="Hao P."/>
            <person name="Wang L."/>
            <person name="Jiang B.-L."/>
            <person name="Zeng S."/>
            <person name="Gu W.-Y."/>
            <person name="Lu G."/>
            <person name="Rong L."/>
            <person name="Tian Y."/>
            <person name="Yao Z."/>
            <person name="Fu G."/>
            <person name="Chen B."/>
            <person name="Fang R."/>
            <person name="Qiang B."/>
            <person name="Chen Z."/>
            <person name="Zhao G.-P."/>
            <person name="Tang J.-L."/>
            <person name="He C."/>
        </authorList>
    </citation>
    <scope>NUCLEOTIDE SEQUENCE [LARGE SCALE GENOMIC DNA]</scope>
    <source>
        <strain>8004</strain>
    </source>
</reference>
<reference key="3">
    <citation type="journal article" date="1991" name="Mol. Gen. Genet.">
        <title>Genetic and molecular analysis of a cluster of rpf genes involved in positive regulation of synthesis of extracellular enzymes and polysaccharide in Xanthomonas campestris pathovar campestris.</title>
        <authorList>
            <person name="Tang J.-L."/>
            <person name="Liu Y.-N."/>
            <person name="Barber C.E."/>
            <person name="Dow J.M."/>
            <person name="Wootton J.C."/>
            <person name="Daniels M.J."/>
        </authorList>
    </citation>
    <scope>NUCLEOTIDE SEQUENCE [GENOMIC DNA] OF 50-726</scope>
    <scope>MUTAGENESIS</scope>
</reference>
<reference key="4">
    <citation type="journal article" date="2003" name="Proc. Natl. Acad. Sci. U.S.A.">
        <title>Biofilm dispersal in Xanthomonas campestris is controlled by cell-cell signaling and is required for full virulence to plants.</title>
        <authorList>
            <person name="Dow J.M."/>
            <person name="Crossman L."/>
            <person name="Findlay K."/>
            <person name="He Y.Q."/>
            <person name="Feng J.X."/>
            <person name="Tang J.L."/>
        </authorList>
    </citation>
    <scope>FUNCTION</scope>
</reference>
<reference key="5">
    <citation type="journal article" date="2006" name="Proc. Natl. Acad. Sci. U.S.A.">
        <title>Cell-cell signaling in Xanthomonas campestris involves an HD-GYP domain protein that functions in cyclic di-GMP turnover.</title>
        <authorList>
            <person name="Ryan R.P."/>
            <person name="Fouhy Y."/>
            <person name="Lucey J.F."/>
            <person name="Crossman L.C."/>
            <person name="Spiro S."/>
            <person name="He Y.W."/>
            <person name="Zhang L.H."/>
            <person name="Heeb S."/>
            <person name="Camara M."/>
            <person name="Williams P."/>
            <person name="Dow J.M."/>
        </authorList>
    </citation>
    <scope>RETRACTED PAPER</scope>
    <source>
        <strain>8004</strain>
    </source>
</reference>
<reference key="6">
    <citation type="journal article" date="2017" name="Proc. Natl. Acad. Sci. U.S.A.">
        <authorList>
            <person name="Ryan R.P."/>
            <person name="Fouhy Y."/>
            <person name="Lucey J.F."/>
            <person name="Crossman L.C."/>
            <person name="Spiro S."/>
            <person name="He Y.W."/>
            <person name="Zhang L.H."/>
            <person name="Heeb S."/>
            <person name="Camara M."/>
            <person name="Williams P."/>
            <person name="Dow J.M."/>
        </authorList>
    </citation>
    <scope>RETRACTION NOTICE OF PUBMED:16611728</scope>
</reference>
<reference key="7">
    <citation type="journal article" date="2006" name="J. Biol. Chem.">
        <title>Dual signaling functions of the hybrid sensor kinase RpfC of Xanthomonas campestris involve either phosphorelay or receiver domain-protein interaction.</title>
        <authorList>
            <person name="He Y.W."/>
            <person name="Wang C."/>
            <person name="Zhou L."/>
            <person name="Song H."/>
            <person name="Dow J.M."/>
            <person name="Zhang L.H."/>
        </authorList>
    </citation>
    <scope>FUNCTION</scope>
    <scope>INTERACTION WITH RPFF</scope>
    <scope>DOMAIN</scope>
    <scope>MUTAGENESIS OF HIS-198; GLN-496; GLU-504; ASP-512; ILE-552 AND HIS-657</scope>
</reference>
<reference key="8">
    <citation type="journal article" date="2010" name="Proc. Natl. Acad. Sci. U.S.A.">
        <title>Cell-cell signal-dependent dynamic interactions between HD-GYP and GGDEF domain proteins mediate virulence in Xanthomonas campestris.</title>
        <authorList>
            <person name="Ryan R.P."/>
            <person name="McCarthy Y."/>
            <person name="Andrade M."/>
            <person name="Farah C.S."/>
            <person name="Armitage J.P."/>
            <person name="Dow J.M."/>
        </authorList>
    </citation>
    <scope>SUBCELLULAR LOCATION</scope>
    <source>
        <strain>8004</strain>
    </source>
</reference>
<reference key="9">
    <citation type="journal article" date="2017" name="PLoS Pathog.">
        <title>Fatty acid DSF binds and allosterically activates histidine kinase RpfC of phytopathogenic bacterium Xanthomonas campestris pv. campestris to regulate quorum-sensing and virulence.</title>
        <authorList>
            <person name="Cai Z."/>
            <person name="Yuan Z.H."/>
            <person name="Zhang H."/>
            <person name="Pan Y."/>
            <person name="Wu Y."/>
            <person name="Tian X.Q."/>
            <person name="Wang F.F."/>
            <person name="Wang L."/>
            <person name="Qian W."/>
        </authorList>
    </citation>
    <scope>FUNCTION</scope>
    <scope>KINASE ACTIVITY</scope>
    <scope>ACTIVITY REGULATION</scope>
    <scope>DOMAIN</scope>
    <scope>AUTOPHOSPHORYLATION</scope>
    <scope>MUTAGENESIS OF ARG-15; ASP-17; SER-18; GLU-19; GLN-22; LEU-172; ALA-178; ASP-512 AND HIS-657</scope>
    <source>
        <strain>8004</strain>
    </source>
</reference>